<comment type="function">
    <text evidence="1">The natural substrate for this enzyme may be peptidyl-tRNAs which drop off the ribosome during protein synthesis.</text>
</comment>
<comment type="catalytic activity">
    <reaction evidence="1">
        <text>an N-acyl-L-alpha-aminoacyl-tRNA + H2O = an N-acyl-L-amino acid + a tRNA + H(+)</text>
        <dbReference type="Rhea" id="RHEA:54448"/>
        <dbReference type="Rhea" id="RHEA-COMP:10123"/>
        <dbReference type="Rhea" id="RHEA-COMP:13883"/>
        <dbReference type="ChEBI" id="CHEBI:15377"/>
        <dbReference type="ChEBI" id="CHEBI:15378"/>
        <dbReference type="ChEBI" id="CHEBI:59874"/>
        <dbReference type="ChEBI" id="CHEBI:78442"/>
        <dbReference type="ChEBI" id="CHEBI:138191"/>
        <dbReference type="EC" id="3.1.1.29"/>
    </reaction>
</comment>
<comment type="subcellular location">
    <subcellularLocation>
        <location evidence="1">Cytoplasm</location>
    </subcellularLocation>
</comment>
<comment type="similarity">
    <text evidence="1">Belongs to the PTH2 family.</text>
</comment>
<protein>
    <recommendedName>
        <fullName evidence="1">Peptidyl-tRNA hydrolase</fullName>
        <shortName evidence="1">PTH</shortName>
        <ecNumber evidence="1">3.1.1.29</ecNumber>
    </recommendedName>
</protein>
<sequence length="118" mass="12926">MFKYKQVIVARKDLKLSKGKFAVQVAHGAVTAAIKAQKEKPEWFKAWFHEGQKKVVVKAENLEELFKLKAEAEKLGLPTALIKDAGLTEIPPGTVTVLAIGPGPEEVVDKVTGHLKLL</sequence>
<name>PTH_THEKO</name>
<evidence type="ECO:0000255" key="1">
    <source>
        <dbReference type="HAMAP-Rule" id="MF_00628"/>
    </source>
</evidence>
<proteinExistence type="inferred from homology"/>
<dbReference type="EC" id="3.1.1.29" evidence="1"/>
<dbReference type="EMBL" id="AP006878">
    <property type="protein sequence ID" value="BAD86489.1"/>
    <property type="molecule type" value="Genomic_DNA"/>
</dbReference>
<dbReference type="RefSeq" id="WP_011251250.1">
    <property type="nucleotide sequence ID" value="NC_006624.1"/>
</dbReference>
<dbReference type="SMR" id="Q5JDB8"/>
<dbReference type="FunCoup" id="Q5JDB8">
    <property type="interactions" value="154"/>
</dbReference>
<dbReference type="STRING" id="69014.TK2300"/>
<dbReference type="EnsemblBacteria" id="BAD86489">
    <property type="protein sequence ID" value="BAD86489"/>
    <property type="gene ID" value="TK2300"/>
</dbReference>
<dbReference type="GeneID" id="78448845"/>
<dbReference type="KEGG" id="tko:TK2300"/>
<dbReference type="PATRIC" id="fig|69014.16.peg.2255"/>
<dbReference type="eggNOG" id="arCOG04228">
    <property type="taxonomic scope" value="Archaea"/>
</dbReference>
<dbReference type="HOGENOM" id="CLU_073661_2_2_2"/>
<dbReference type="InParanoid" id="Q5JDB8"/>
<dbReference type="OrthoDB" id="6075at2157"/>
<dbReference type="PhylomeDB" id="Q5JDB8"/>
<dbReference type="Proteomes" id="UP000000536">
    <property type="component" value="Chromosome"/>
</dbReference>
<dbReference type="GO" id="GO:0005829">
    <property type="term" value="C:cytosol"/>
    <property type="evidence" value="ECO:0000318"/>
    <property type="project" value="GO_Central"/>
</dbReference>
<dbReference type="GO" id="GO:0004045">
    <property type="term" value="F:peptidyl-tRNA hydrolase activity"/>
    <property type="evidence" value="ECO:0000318"/>
    <property type="project" value="GO_Central"/>
</dbReference>
<dbReference type="GO" id="GO:0006412">
    <property type="term" value="P:translation"/>
    <property type="evidence" value="ECO:0007669"/>
    <property type="project" value="UniProtKB-UniRule"/>
</dbReference>
<dbReference type="CDD" id="cd02430">
    <property type="entry name" value="PTH2"/>
    <property type="match status" value="1"/>
</dbReference>
<dbReference type="FunFam" id="3.40.1490.10:FF:000001">
    <property type="entry name" value="Peptidyl-tRNA hydrolase 2"/>
    <property type="match status" value="1"/>
</dbReference>
<dbReference type="Gene3D" id="3.40.1490.10">
    <property type="entry name" value="Bit1"/>
    <property type="match status" value="1"/>
</dbReference>
<dbReference type="HAMAP" id="MF_00628">
    <property type="entry name" value="Pept_tRNA_hydro_arch"/>
    <property type="match status" value="1"/>
</dbReference>
<dbReference type="InterPro" id="IPR023476">
    <property type="entry name" value="Pep_tRNA_hydro_II_dom_sf"/>
</dbReference>
<dbReference type="InterPro" id="IPR034759">
    <property type="entry name" value="Pept_tRNA_hydro_arch"/>
</dbReference>
<dbReference type="InterPro" id="IPR002833">
    <property type="entry name" value="PTH2"/>
</dbReference>
<dbReference type="NCBIfam" id="TIGR00283">
    <property type="entry name" value="arch_pth2"/>
    <property type="match status" value="1"/>
</dbReference>
<dbReference type="NCBIfam" id="NF003314">
    <property type="entry name" value="PRK04322.1"/>
    <property type="match status" value="1"/>
</dbReference>
<dbReference type="PANTHER" id="PTHR12649">
    <property type="entry name" value="PEPTIDYL-TRNA HYDROLASE 2"/>
    <property type="match status" value="1"/>
</dbReference>
<dbReference type="PANTHER" id="PTHR12649:SF11">
    <property type="entry name" value="PEPTIDYL-TRNA HYDROLASE 2, MITOCHONDRIAL"/>
    <property type="match status" value="1"/>
</dbReference>
<dbReference type="Pfam" id="PF01981">
    <property type="entry name" value="PTH2"/>
    <property type="match status" value="1"/>
</dbReference>
<dbReference type="SUPFAM" id="SSF102462">
    <property type="entry name" value="Peptidyl-tRNA hydrolase II"/>
    <property type="match status" value="1"/>
</dbReference>
<gene>
    <name evidence="1" type="primary">pth</name>
    <name type="ordered locus">TK2300</name>
</gene>
<feature type="chain" id="PRO_0000120302" description="Peptidyl-tRNA hydrolase">
    <location>
        <begin position="1"/>
        <end position="118"/>
    </location>
</feature>
<accession>Q5JDB8</accession>
<organism>
    <name type="scientific">Thermococcus kodakarensis (strain ATCC BAA-918 / JCM 12380 / KOD1)</name>
    <name type="common">Pyrococcus kodakaraensis (strain KOD1)</name>
    <dbReference type="NCBI Taxonomy" id="69014"/>
    <lineage>
        <taxon>Archaea</taxon>
        <taxon>Methanobacteriati</taxon>
        <taxon>Methanobacteriota</taxon>
        <taxon>Thermococci</taxon>
        <taxon>Thermococcales</taxon>
        <taxon>Thermococcaceae</taxon>
        <taxon>Thermococcus</taxon>
    </lineage>
</organism>
<keyword id="KW-0963">Cytoplasm</keyword>
<keyword id="KW-0378">Hydrolase</keyword>
<keyword id="KW-1185">Reference proteome</keyword>
<reference key="1">
    <citation type="journal article" date="2005" name="Genome Res.">
        <title>Complete genome sequence of the hyperthermophilic archaeon Thermococcus kodakaraensis KOD1 and comparison with Pyrococcus genomes.</title>
        <authorList>
            <person name="Fukui T."/>
            <person name="Atomi H."/>
            <person name="Kanai T."/>
            <person name="Matsumi R."/>
            <person name="Fujiwara S."/>
            <person name="Imanaka T."/>
        </authorList>
    </citation>
    <scope>NUCLEOTIDE SEQUENCE [LARGE SCALE GENOMIC DNA]</scope>
    <source>
        <strain>ATCC BAA-918 / JCM 12380 / KOD1</strain>
    </source>
</reference>